<accession>B1VYT6</accession>
<proteinExistence type="inferred from homology"/>
<keyword id="KW-0963">Cytoplasm</keyword>
<keyword id="KW-0251">Elongation factor</keyword>
<keyword id="KW-0648">Protein biosynthesis</keyword>
<comment type="function">
    <text evidence="1">Associates with the EF-Tu.GDP complex and induces the exchange of GDP to GTP. It remains bound to the aminoacyl-tRNA.EF-Tu.GTP complex up to the GTP hydrolysis stage on the ribosome.</text>
</comment>
<comment type="subcellular location">
    <subcellularLocation>
        <location evidence="1">Cytoplasm</location>
    </subcellularLocation>
</comment>
<comment type="similarity">
    <text evidence="1">Belongs to the EF-Ts family.</text>
</comment>
<name>EFTS_STRGG</name>
<organism>
    <name type="scientific">Streptomyces griseus subsp. griseus (strain JCM 4626 / CBS 651.72 / NBRC 13350 / KCC S-0626 / ISP 5235)</name>
    <dbReference type="NCBI Taxonomy" id="455632"/>
    <lineage>
        <taxon>Bacteria</taxon>
        <taxon>Bacillati</taxon>
        <taxon>Actinomycetota</taxon>
        <taxon>Actinomycetes</taxon>
        <taxon>Kitasatosporales</taxon>
        <taxon>Streptomycetaceae</taxon>
        <taxon>Streptomyces</taxon>
    </lineage>
</organism>
<protein>
    <recommendedName>
        <fullName evidence="1">Elongation factor Ts</fullName>
        <shortName evidence="1">EF-Ts</shortName>
    </recommendedName>
</protein>
<dbReference type="EMBL" id="AP009493">
    <property type="protein sequence ID" value="BAG18691.1"/>
    <property type="molecule type" value="Genomic_DNA"/>
</dbReference>
<dbReference type="RefSeq" id="WP_003965939.1">
    <property type="nucleotide sequence ID" value="NC_010572.1"/>
</dbReference>
<dbReference type="SMR" id="B1VYT6"/>
<dbReference type="KEGG" id="sgr:SGR_1862"/>
<dbReference type="eggNOG" id="COG0264">
    <property type="taxonomic scope" value="Bacteria"/>
</dbReference>
<dbReference type="HOGENOM" id="CLU_047155_0_0_11"/>
<dbReference type="Proteomes" id="UP000001685">
    <property type="component" value="Chromosome"/>
</dbReference>
<dbReference type="GO" id="GO:0005737">
    <property type="term" value="C:cytoplasm"/>
    <property type="evidence" value="ECO:0007669"/>
    <property type="project" value="UniProtKB-SubCell"/>
</dbReference>
<dbReference type="GO" id="GO:0003746">
    <property type="term" value="F:translation elongation factor activity"/>
    <property type="evidence" value="ECO:0007669"/>
    <property type="project" value="UniProtKB-UniRule"/>
</dbReference>
<dbReference type="CDD" id="cd14275">
    <property type="entry name" value="UBA_EF-Ts"/>
    <property type="match status" value="1"/>
</dbReference>
<dbReference type="FunFam" id="1.10.286.20:FF:000001">
    <property type="entry name" value="Elongation factor Ts"/>
    <property type="match status" value="1"/>
</dbReference>
<dbReference type="FunFam" id="1.10.8.10:FF:000001">
    <property type="entry name" value="Elongation factor Ts"/>
    <property type="match status" value="1"/>
</dbReference>
<dbReference type="Gene3D" id="1.10.286.20">
    <property type="match status" value="1"/>
</dbReference>
<dbReference type="Gene3D" id="1.10.8.10">
    <property type="entry name" value="DNA helicase RuvA subunit, C-terminal domain"/>
    <property type="match status" value="1"/>
</dbReference>
<dbReference type="Gene3D" id="3.30.479.20">
    <property type="entry name" value="Elongation factor Ts, dimerisation domain"/>
    <property type="match status" value="2"/>
</dbReference>
<dbReference type="HAMAP" id="MF_00050">
    <property type="entry name" value="EF_Ts"/>
    <property type="match status" value="1"/>
</dbReference>
<dbReference type="InterPro" id="IPR036402">
    <property type="entry name" value="EF-Ts_dimer_sf"/>
</dbReference>
<dbReference type="InterPro" id="IPR001816">
    <property type="entry name" value="Transl_elong_EFTs/EF1B"/>
</dbReference>
<dbReference type="InterPro" id="IPR014039">
    <property type="entry name" value="Transl_elong_EFTs/EF1B_dimer"/>
</dbReference>
<dbReference type="InterPro" id="IPR018101">
    <property type="entry name" value="Transl_elong_Ts_CS"/>
</dbReference>
<dbReference type="InterPro" id="IPR009060">
    <property type="entry name" value="UBA-like_sf"/>
</dbReference>
<dbReference type="NCBIfam" id="TIGR00116">
    <property type="entry name" value="tsf"/>
    <property type="match status" value="1"/>
</dbReference>
<dbReference type="PANTHER" id="PTHR11741">
    <property type="entry name" value="ELONGATION FACTOR TS"/>
    <property type="match status" value="1"/>
</dbReference>
<dbReference type="PANTHER" id="PTHR11741:SF0">
    <property type="entry name" value="ELONGATION FACTOR TS, MITOCHONDRIAL"/>
    <property type="match status" value="1"/>
</dbReference>
<dbReference type="Pfam" id="PF00889">
    <property type="entry name" value="EF_TS"/>
    <property type="match status" value="1"/>
</dbReference>
<dbReference type="SUPFAM" id="SSF54713">
    <property type="entry name" value="Elongation factor Ts (EF-Ts), dimerisation domain"/>
    <property type="match status" value="2"/>
</dbReference>
<dbReference type="SUPFAM" id="SSF46934">
    <property type="entry name" value="UBA-like"/>
    <property type="match status" value="1"/>
</dbReference>
<dbReference type="PROSITE" id="PS01126">
    <property type="entry name" value="EF_TS_1"/>
    <property type="match status" value="1"/>
</dbReference>
<dbReference type="PROSITE" id="PS01127">
    <property type="entry name" value="EF_TS_2"/>
    <property type="match status" value="1"/>
</dbReference>
<sequence length="278" mass="29755">MANYTAADVKKLRELTGAGMMDCKKALDEADGNVDKAVEALRIKGQKGVAKREGRSAENGAVVSLISEDQTSGVLLELKCETDFVAKGDKFQAVANTLAAHVAATSPADIEALLASEIEAGKTVQAYVDEANANLGEKIVLDRFAQFTGAYVGVYMHRTMPDLPPQIGVLVELDKADAELAKGIAQHIAAFAPKYLSREDVPAEVVEAERRVAEETTRAEGKPEAALPKIVEGRVNGFFKEATLLGQPYALDAKKSVQKVLDEAGVTLKRFSRIKVGI</sequence>
<gene>
    <name evidence="1" type="primary">tsf</name>
    <name type="ordered locus">SGR_1862</name>
</gene>
<evidence type="ECO:0000255" key="1">
    <source>
        <dbReference type="HAMAP-Rule" id="MF_00050"/>
    </source>
</evidence>
<feature type="chain" id="PRO_1000189888" description="Elongation factor Ts">
    <location>
        <begin position="1"/>
        <end position="278"/>
    </location>
</feature>
<feature type="region of interest" description="Involved in Mg(2+) ion dislocation from EF-Tu" evidence="1">
    <location>
        <begin position="82"/>
        <end position="85"/>
    </location>
</feature>
<reference key="1">
    <citation type="journal article" date="2008" name="J. Bacteriol.">
        <title>Genome sequence of the streptomycin-producing microorganism Streptomyces griseus IFO 13350.</title>
        <authorList>
            <person name="Ohnishi Y."/>
            <person name="Ishikawa J."/>
            <person name="Hara H."/>
            <person name="Suzuki H."/>
            <person name="Ikenoya M."/>
            <person name="Ikeda H."/>
            <person name="Yamashita A."/>
            <person name="Hattori M."/>
            <person name="Horinouchi S."/>
        </authorList>
    </citation>
    <scope>NUCLEOTIDE SEQUENCE [LARGE SCALE GENOMIC DNA]</scope>
    <source>
        <strain>JCM 4626 / CBS 651.72 / NBRC 13350 / KCC S-0626 / ISP 5235</strain>
    </source>
</reference>